<evidence type="ECO:0000255" key="1">
    <source>
        <dbReference type="HAMAP-Rule" id="MF_01862"/>
    </source>
</evidence>
<keyword id="KW-0963">Cytoplasm</keyword>
<keyword id="KW-0489">Methyltransferase</keyword>
<keyword id="KW-0698">rRNA processing</keyword>
<keyword id="KW-0949">S-adenosyl-L-methionine</keyword>
<keyword id="KW-0808">Transferase</keyword>
<accession>B0TSU8</accession>
<feature type="chain" id="PRO_0000369772" description="Ribosomal RNA small subunit methyltransferase C">
    <location>
        <begin position="1"/>
        <end position="341"/>
    </location>
</feature>
<reference key="1">
    <citation type="submission" date="2008-01" db="EMBL/GenBank/DDBJ databases">
        <title>Complete sequence of Shewanella halifaxensis HAW-EB4.</title>
        <authorList>
            <consortium name="US DOE Joint Genome Institute"/>
            <person name="Copeland A."/>
            <person name="Lucas S."/>
            <person name="Lapidus A."/>
            <person name="Glavina del Rio T."/>
            <person name="Dalin E."/>
            <person name="Tice H."/>
            <person name="Bruce D."/>
            <person name="Goodwin L."/>
            <person name="Pitluck S."/>
            <person name="Sims D."/>
            <person name="Brettin T."/>
            <person name="Detter J.C."/>
            <person name="Han C."/>
            <person name="Kuske C.R."/>
            <person name="Schmutz J."/>
            <person name="Larimer F."/>
            <person name="Land M."/>
            <person name="Hauser L."/>
            <person name="Kyrpides N."/>
            <person name="Kim E."/>
            <person name="Zhao J.-S."/>
            <person name="Richardson P."/>
        </authorList>
    </citation>
    <scope>NUCLEOTIDE SEQUENCE [LARGE SCALE GENOMIC DNA]</scope>
    <source>
        <strain>HAW-EB4</strain>
    </source>
</reference>
<comment type="function">
    <text evidence="1">Specifically methylates the guanine in position 1207 of 16S rRNA in the 30S particle.</text>
</comment>
<comment type="catalytic activity">
    <reaction evidence="1">
        <text>guanosine(1207) in 16S rRNA + S-adenosyl-L-methionine = N(2)-methylguanosine(1207) in 16S rRNA + S-adenosyl-L-homocysteine + H(+)</text>
        <dbReference type="Rhea" id="RHEA:42736"/>
        <dbReference type="Rhea" id="RHEA-COMP:10213"/>
        <dbReference type="Rhea" id="RHEA-COMP:10214"/>
        <dbReference type="ChEBI" id="CHEBI:15378"/>
        <dbReference type="ChEBI" id="CHEBI:57856"/>
        <dbReference type="ChEBI" id="CHEBI:59789"/>
        <dbReference type="ChEBI" id="CHEBI:74269"/>
        <dbReference type="ChEBI" id="CHEBI:74481"/>
        <dbReference type="EC" id="2.1.1.172"/>
    </reaction>
</comment>
<comment type="subunit">
    <text evidence="1">Monomer.</text>
</comment>
<comment type="subcellular location">
    <subcellularLocation>
        <location evidence="1">Cytoplasm</location>
    </subcellularLocation>
</comment>
<comment type="similarity">
    <text evidence="1">Belongs to the methyltransferase superfamily. RsmC family.</text>
</comment>
<gene>
    <name evidence="1" type="primary">rsmC</name>
    <name type="ordered locus">Shal_0698</name>
</gene>
<proteinExistence type="inferred from homology"/>
<sequence length="341" mass="37238">MLTNASQVLLRNRDLVKDQSVLVLNYEGDHLPKELLNTARSVCGLALDYHHHLMMQPYAAANLTLHFGHQLPNDESFDTVIVYFPKAKALAPYLFNLAAKHLKPQGQLIVVGENKGGIKSLPKQLPSYFDKPFKADNARHCIVFLSELNAAAPTLKLTDWISRYQLDTPQGQVTICNLVGVFSEKKLDEGTKLLLENLPKMRGKVLDFGCGAGVIAAALLKAQPELTLECVDINAMALASCEFTLQANGFNAKIFASDGLAQAAGRYDGIISNPPFHDGLASTTNIATNFVKDSAANLTTGGLFHIVANRHLPYSDTIAEHFGSVDVTAENNKYKIYSNVK</sequence>
<protein>
    <recommendedName>
        <fullName evidence="1">Ribosomal RNA small subunit methyltransferase C</fullName>
        <ecNumber evidence="1">2.1.1.172</ecNumber>
    </recommendedName>
    <alternativeName>
        <fullName evidence="1">16S rRNA m2G1207 methyltransferase</fullName>
    </alternativeName>
    <alternativeName>
        <fullName evidence="1">rRNA (guanine-N(2)-)-methyltransferase RsmC</fullName>
    </alternativeName>
</protein>
<dbReference type="EC" id="2.1.1.172" evidence="1"/>
<dbReference type="EMBL" id="CP000931">
    <property type="protein sequence ID" value="ABZ75273.1"/>
    <property type="molecule type" value="Genomic_DNA"/>
</dbReference>
<dbReference type="RefSeq" id="WP_012275827.1">
    <property type="nucleotide sequence ID" value="NC_010334.1"/>
</dbReference>
<dbReference type="SMR" id="B0TSU8"/>
<dbReference type="STRING" id="458817.Shal_0698"/>
<dbReference type="KEGG" id="shl:Shal_0698"/>
<dbReference type="eggNOG" id="COG2813">
    <property type="taxonomic scope" value="Bacteria"/>
</dbReference>
<dbReference type="HOGENOM" id="CLU_049581_0_1_6"/>
<dbReference type="OrthoDB" id="9816072at2"/>
<dbReference type="Proteomes" id="UP000001317">
    <property type="component" value="Chromosome"/>
</dbReference>
<dbReference type="GO" id="GO:0005737">
    <property type="term" value="C:cytoplasm"/>
    <property type="evidence" value="ECO:0007669"/>
    <property type="project" value="UniProtKB-SubCell"/>
</dbReference>
<dbReference type="GO" id="GO:0052914">
    <property type="term" value="F:16S rRNA (guanine(1207)-N(2))-methyltransferase activity"/>
    <property type="evidence" value="ECO:0007669"/>
    <property type="project" value="UniProtKB-EC"/>
</dbReference>
<dbReference type="GO" id="GO:0003676">
    <property type="term" value="F:nucleic acid binding"/>
    <property type="evidence" value="ECO:0007669"/>
    <property type="project" value="InterPro"/>
</dbReference>
<dbReference type="CDD" id="cd02440">
    <property type="entry name" value="AdoMet_MTases"/>
    <property type="match status" value="1"/>
</dbReference>
<dbReference type="Gene3D" id="3.40.50.150">
    <property type="entry name" value="Vaccinia Virus protein VP39"/>
    <property type="match status" value="2"/>
</dbReference>
<dbReference type="HAMAP" id="MF_01862">
    <property type="entry name" value="16SrRNA_methyltr_C"/>
    <property type="match status" value="1"/>
</dbReference>
<dbReference type="InterPro" id="IPR002052">
    <property type="entry name" value="DNA_methylase_N6_adenine_CS"/>
</dbReference>
<dbReference type="InterPro" id="IPR013675">
    <property type="entry name" value="Mtase_sm_N"/>
</dbReference>
<dbReference type="InterPro" id="IPR023543">
    <property type="entry name" value="rRNA_ssu_MeTfrase_C"/>
</dbReference>
<dbReference type="InterPro" id="IPR046977">
    <property type="entry name" value="RsmC/RlmG"/>
</dbReference>
<dbReference type="InterPro" id="IPR029063">
    <property type="entry name" value="SAM-dependent_MTases_sf"/>
</dbReference>
<dbReference type="InterPro" id="IPR007848">
    <property type="entry name" value="Small_mtfrase_dom"/>
</dbReference>
<dbReference type="PANTHER" id="PTHR47816">
    <property type="entry name" value="RIBOSOMAL RNA SMALL SUBUNIT METHYLTRANSFERASE C"/>
    <property type="match status" value="1"/>
</dbReference>
<dbReference type="PANTHER" id="PTHR47816:SF4">
    <property type="entry name" value="RIBOSOMAL RNA SMALL SUBUNIT METHYLTRANSFERASE C"/>
    <property type="match status" value="1"/>
</dbReference>
<dbReference type="Pfam" id="PF05175">
    <property type="entry name" value="MTS"/>
    <property type="match status" value="1"/>
</dbReference>
<dbReference type="Pfam" id="PF08468">
    <property type="entry name" value="MTS_N"/>
    <property type="match status" value="1"/>
</dbReference>
<dbReference type="SUPFAM" id="SSF53335">
    <property type="entry name" value="S-adenosyl-L-methionine-dependent methyltransferases"/>
    <property type="match status" value="2"/>
</dbReference>
<name>RSMC_SHEHH</name>
<organism>
    <name type="scientific">Shewanella halifaxensis (strain HAW-EB4)</name>
    <dbReference type="NCBI Taxonomy" id="458817"/>
    <lineage>
        <taxon>Bacteria</taxon>
        <taxon>Pseudomonadati</taxon>
        <taxon>Pseudomonadota</taxon>
        <taxon>Gammaproteobacteria</taxon>
        <taxon>Alteromonadales</taxon>
        <taxon>Shewanellaceae</taxon>
        <taxon>Shewanella</taxon>
    </lineage>
</organism>